<accession>A8ESI8</accession>
<keyword id="KW-0021">Allosteric enzyme</keyword>
<keyword id="KW-0067">ATP-binding</keyword>
<keyword id="KW-0963">Cytoplasm</keyword>
<keyword id="KW-0418">Kinase</keyword>
<keyword id="KW-0547">Nucleotide-binding</keyword>
<keyword id="KW-0665">Pyrimidine biosynthesis</keyword>
<keyword id="KW-1185">Reference proteome</keyword>
<keyword id="KW-0808">Transferase</keyword>
<sequence length="235" mass="25415">MNKRVLVKFSGEALAGAEGYGIDTKILDYIAEEIKSLVENGIEVAIVIGGGNIIRGVTAAADGVIKRTSADYMGMLGTVINGVAMQEALEYKGLSARLQTAIKMEQIAEPFIVRKAMRHFEKGRVVIFGAGTGNPYFTTDTGATLRATEIGASMLIKATKVNGVYDKDPMKYPDAQKLETLSYDRALEDQIKVMDDTAIALAKDNKLPIAVTNMNEKGNLLRIVKGDYSKCSIVK</sequence>
<comment type="function">
    <text evidence="1">Catalyzes the reversible phosphorylation of UMP to UDP.</text>
</comment>
<comment type="catalytic activity">
    <reaction evidence="1">
        <text>UMP + ATP = UDP + ADP</text>
        <dbReference type="Rhea" id="RHEA:24400"/>
        <dbReference type="ChEBI" id="CHEBI:30616"/>
        <dbReference type="ChEBI" id="CHEBI:57865"/>
        <dbReference type="ChEBI" id="CHEBI:58223"/>
        <dbReference type="ChEBI" id="CHEBI:456216"/>
        <dbReference type="EC" id="2.7.4.22"/>
    </reaction>
</comment>
<comment type="activity regulation">
    <text evidence="1">Allosterically activated by GTP. Inhibited by UTP.</text>
</comment>
<comment type="pathway">
    <text evidence="1">Pyrimidine metabolism; CTP biosynthesis via de novo pathway; UDP from UMP (UMPK route): step 1/1.</text>
</comment>
<comment type="subunit">
    <text evidence="1">Homohexamer.</text>
</comment>
<comment type="subcellular location">
    <subcellularLocation>
        <location evidence="1">Cytoplasm</location>
    </subcellularLocation>
</comment>
<comment type="similarity">
    <text evidence="1">Belongs to the UMP kinase family.</text>
</comment>
<proteinExistence type="inferred from homology"/>
<feature type="chain" id="PRO_1000066738" description="Uridylate kinase">
    <location>
        <begin position="1"/>
        <end position="235"/>
    </location>
</feature>
<feature type="region of interest" description="Involved in allosteric activation by GTP" evidence="1">
    <location>
        <begin position="16"/>
        <end position="21"/>
    </location>
</feature>
<feature type="binding site" evidence="1">
    <location>
        <begin position="8"/>
        <end position="11"/>
    </location>
    <ligand>
        <name>ATP</name>
        <dbReference type="ChEBI" id="CHEBI:30616"/>
    </ligand>
</feature>
<feature type="binding site" evidence="1">
    <location>
        <position position="50"/>
    </location>
    <ligand>
        <name>UMP</name>
        <dbReference type="ChEBI" id="CHEBI:57865"/>
    </ligand>
</feature>
<feature type="binding site" evidence="1">
    <location>
        <position position="51"/>
    </location>
    <ligand>
        <name>ATP</name>
        <dbReference type="ChEBI" id="CHEBI:30616"/>
    </ligand>
</feature>
<feature type="binding site" evidence="1">
    <location>
        <position position="55"/>
    </location>
    <ligand>
        <name>ATP</name>
        <dbReference type="ChEBI" id="CHEBI:30616"/>
    </ligand>
</feature>
<feature type="binding site" evidence="1">
    <location>
        <position position="71"/>
    </location>
    <ligand>
        <name>UMP</name>
        <dbReference type="ChEBI" id="CHEBI:57865"/>
    </ligand>
</feature>
<feature type="binding site" evidence="1">
    <location>
        <begin position="132"/>
        <end position="139"/>
    </location>
    <ligand>
        <name>UMP</name>
        <dbReference type="ChEBI" id="CHEBI:57865"/>
    </ligand>
</feature>
<feature type="binding site" evidence="1">
    <location>
        <position position="159"/>
    </location>
    <ligand>
        <name>ATP</name>
        <dbReference type="ChEBI" id="CHEBI:30616"/>
    </ligand>
</feature>
<feature type="binding site" evidence="1">
    <location>
        <position position="165"/>
    </location>
    <ligand>
        <name>ATP</name>
        <dbReference type="ChEBI" id="CHEBI:30616"/>
    </ligand>
</feature>
<feature type="binding site" evidence="1">
    <location>
        <position position="168"/>
    </location>
    <ligand>
        <name>ATP</name>
        <dbReference type="ChEBI" id="CHEBI:30616"/>
    </ligand>
</feature>
<gene>
    <name evidence="1" type="primary">pyrH</name>
    <name type="ordered locus">Abu_0647</name>
</gene>
<protein>
    <recommendedName>
        <fullName evidence="1">Uridylate kinase</fullName>
        <shortName evidence="1">UK</shortName>
        <ecNumber evidence="1">2.7.4.22</ecNumber>
    </recommendedName>
    <alternativeName>
        <fullName evidence="1">Uridine monophosphate kinase</fullName>
        <shortName evidence="1">UMP kinase</shortName>
        <shortName evidence="1">UMPK</shortName>
    </alternativeName>
</protein>
<dbReference type="EC" id="2.7.4.22" evidence="1"/>
<dbReference type="EMBL" id="CP000361">
    <property type="protein sequence ID" value="ABV66912.1"/>
    <property type="molecule type" value="Genomic_DNA"/>
</dbReference>
<dbReference type="RefSeq" id="WP_004510703.1">
    <property type="nucleotide sequence ID" value="NC_009850.1"/>
</dbReference>
<dbReference type="SMR" id="A8ESI8"/>
<dbReference type="STRING" id="367737.Abu_0647"/>
<dbReference type="GeneID" id="24303388"/>
<dbReference type="KEGG" id="abu:Abu_0647"/>
<dbReference type="eggNOG" id="COG0528">
    <property type="taxonomic scope" value="Bacteria"/>
</dbReference>
<dbReference type="HOGENOM" id="CLU_033861_0_0_7"/>
<dbReference type="UniPathway" id="UPA00159">
    <property type="reaction ID" value="UER00275"/>
</dbReference>
<dbReference type="Proteomes" id="UP000001136">
    <property type="component" value="Chromosome"/>
</dbReference>
<dbReference type="GO" id="GO:0005829">
    <property type="term" value="C:cytosol"/>
    <property type="evidence" value="ECO:0007669"/>
    <property type="project" value="TreeGrafter"/>
</dbReference>
<dbReference type="GO" id="GO:0005524">
    <property type="term" value="F:ATP binding"/>
    <property type="evidence" value="ECO:0007669"/>
    <property type="project" value="UniProtKB-KW"/>
</dbReference>
<dbReference type="GO" id="GO:0033862">
    <property type="term" value="F:UMP kinase activity"/>
    <property type="evidence" value="ECO:0007669"/>
    <property type="project" value="UniProtKB-EC"/>
</dbReference>
<dbReference type="GO" id="GO:0044210">
    <property type="term" value="P:'de novo' CTP biosynthetic process"/>
    <property type="evidence" value="ECO:0007669"/>
    <property type="project" value="UniProtKB-UniRule"/>
</dbReference>
<dbReference type="GO" id="GO:0006225">
    <property type="term" value="P:UDP biosynthetic process"/>
    <property type="evidence" value="ECO:0007669"/>
    <property type="project" value="TreeGrafter"/>
</dbReference>
<dbReference type="CDD" id="cd04254">
    <property type="entry name" value="AAK_UMPK-PyrH-Ec"/>
    <property type="match status" value="1"/>
</dbReference>
<dbReference type="FunFam" id="3.40.1160.10:FF:000001">
    <property type="entry name" value="Uridylate kinase"/>
    <property type="match status" value="1"/>
</dbReference>
<dbReference type="Gene3D" id="3.40.1160.10">
    <property type="entry name" value="Acetylglutamate kinase-like"/>
    <property type="match status" value="1"/>
</dbReference>
<dbReference type="HAMAP" id="MF_01220_B">
    <property type="entry name" value="PyrH_B"/>
    <property type="match status" value="1"/>
</dbReference>
<dbReference type="InterPro" id="IPR036393">
    <property type="entry name" value="AceGlu_kinase-like_sf"/>
</dbReference>
<dbReference type="InterPro" id="IPR001048">
    <property type="entry name" value="Asp/Glu/Uridylate_kinase"/>
</dbReference>
<dbReference type="InterPro" id="IPR011817">
    <property type="entry name" value="Uridylate_kinase"/>
</dbReference>
<dbReference type="InterPro" id="IPR015963">
    <property type="entry name" value="Uridylate_kinase_bac"/>
</dbReference>
<dbReference type="NCBIfam" id="TIGR02075">
    <property type="entry name" value="pyrH_bact"/>
    <property type="match status" value="1"/>
</dbReference>
<dbReference type="PANTHER" id="PTHR42833">
    <property type="entry name" value="URIDYLATE KINASE"/>
    <property type="match status" value="1"/>
</dbReference>
<dbReference type="PANTHER" id="PTHR42833:SF4">
    <property type="entry name" value="URIDYLATE KINASE PUMPKIN, CHLOROPLASTIC"/>
    <property type="match status" value="1"/>
</dbReference>
<dbReference type="Pfam" id="PF00696">
    <property type="entry name" value="AA_kinase"/>
    <property type="match status" value="1"/>
</dbReference>
<dbReference type="PIRSF" id="PIRSF005650">
    <property type="entry name" value="Uridylate_kin"/>
    <property type="match status" value="1"/>
</dbReference>
<dbReference type="SUPFAM" id="SSF53633">
    <property type="entry name" value="Carbamate kinase-like"/>
    <property type="match status" value="1"/>
</dbReference>
<organism>
    <name type="scientific">Aliarcobacter butzleri (strain RM4018)</name>
    <name type="common">Arcobacter butzleri</name>
    <dbReference type="NCBI Taxonomy" id="367737"/>
    <lineage>
        <taxon>Bacteria</taxon>
        <taxon>Pseudomonadati</taxon>
        <taxon>Campylobacterota</taxon>
        <taxon>Epsilonproteobacteria</taxon>
        <taxon>Campylobacterales</taxon>
        <taxon>Arcobacteraceae</taxon>
        <taxon>Aliarcobacter</taxon>
    </lineage>
</organism>
<reference key="1">
    <citation type="journal article" date="2007" name="PLoS ONE">
        <title>The complete genome sequence and analysis of the Epsilonproteobacterium Arcobacter butzleri.</title>
        <authorList>
            <person name="Miller W.G."/>
            <person name="Parker C.T."/>
            <person name="Rubenfield M."/>
            <person name="Mendz G.L."/>
            <person name="Woesten M.M.S.M."/>
            <person name="Ussery D.W."/>
            <person name="Stolz J.F."/>
            <person name="Binnewies T.T."/>
            <person name="Hallin P.F."/>
            <person name="Wang G."/>
            <person name="Malek J.A."/>
            <person name="Rogosin A."/>
            <person name="Stanker L.H."/>
            <person name="Mandrell R.E."/>
        </authorList>
    </citation>
    <scope>NUCLEOTIDE SEQUENCE [LARGE SCALE GENOMIC DNA]</scope>
    <source>
        <strain>RM4018</strain>
    </source>
</reference>
<name>PYRH_ALIB4</name>
<evidence type="ECO:0000255" key="1">
    <source>
        <dbReference type="HAMAP-Rule" id="MF_01220"/>
    </source>
</evidence>